<dbReference type="EC" id="6.5.1.1" evidence="1"/>
<dbReference type="EMBL" id="CP000609">
    <property type="protein sequence ID" value="ABO35103.1"/>
    <property type="molecule type" value="Genomic_DNA"/>
</dbReference>
<dbReference type="RefSeq" id="WP_011868557.1">
    <property type="nucleotide sequence ID" value="NC_009135.1"/>
</dbReference>
<dbReference type="SMR" id="A4FY19"/>
<dbReference type="STRING" id="402880.MmarC5_0793"/>
<dbReference type="GeneID" id="4928716"/>
<dbReference type="KEGG" id="mmq:MmarC5_0793"/>
<dbReference type="eggNOG" id="arCOG01347">
    <property type="taxonomic scope" value="Archaea"/>
</dbReference>
<dbReference type="HOGENOM" id="CLU_005138_6_0_2"/>
<dbReference type="OrthoDB" id="31274at2157"/>
<dbReference type="Proteomes" id="UP000000253">
    <property type="component" value="Chromosome"/>
</dbReference>
<dbReference type="GO" id="GO:0005524">
    <property type="term" value="F:ATP binding"/>
    <property type="evidence" value="ECO:0007669"/>
    <property type="project" value="UniProtKB-UniRule"/>
</dbReference>
<dbReference type="GO" id="GO:0003677">
    <property type="term" value="F:DNA binding"/>
    <property type="evidence" value="ECO:0007669"/>
    <property type="project" value="InterPro"/>
</dbReference>
<dbReference type="GO" id="GO:0003910">
    <property type="term" value="F:DNA ligase (ATP) activity"/>
    <property type="evidence" value="ECO:0007669"/>
    <property type="project" value="UniProtKB-UniRule"/>
</dbReference>
<dbReference type="GO" id="GO:0046872">
    <property type="term" value="F:metal ion binding"/>
    <property type="evidence" value="ECO:0007669"/>
    <property type="project" value="UniProtKB-KW"/>
</dbReference>
<dbReference type="GO" id="GO:0051301">
    <property type="term" value="P:cell division"/>
    <property type="evidence" value="ECO:0007669"/>
    <property type="project" value="UniProtKB-KW"/>
</dbReference>
<dbReference type="GO" id="GO:0071897">
    <property type="term" value="P:DNA biosynthetic process"/>
    <property type="evidence" value="ECO:0007669"/>
    <property type="project" value="InterPro"/>
</dbReference>
<dbReference type="GO" id="GO:0006310">
    <property type="term" value="P:DNA recombination"/>
    <property type="evidence" value="ECO:0007669"/>
    <property type="project" value="UniProtKB-UniRule"/>
</dbReference>
<dbReference type="GO" id="GO:0006281">
    <property type="term" value="P:DNA repair"/>
    <property type="evidence" value="ECO:0007669"/>
    <property type="project" value="UniProtKB-UniRule"/>
</dbReference>
<dbReference type="GO" id="GO:0006273">
    <property type="term" value="P:lagging strand elongation"/>
    <property type="evidence" value="ECO:0007669"/>
    <property type="project" value="TreeGrafter"/>
</dbReference>
<dbReference type="CDD" id="cd07901">
    <property type="entry name" value="Adenylation_DNA_ligase_Arch_LigB"/>
    <property type="match status" value="1"/>
</dbReference>
<dbReference type="FunFam" id="1.10.3260.10:FF:000007">
    <property type="entry name" value="DNA ligase"/>
    <property type="match status" value="1"/>
</dbReference>
<dbReference type="Gene3D" id="1.10.3260.10">
    <property type="entry name" value="DNA ligase, ATP-dependent, N-terminal domain"/>
    <property type="match status" value="1"/>
</dbReference>
<dbReference type="Gene3D" id="3.30.470.30">
    <property type="entry name" value="DNA ligase/mRNA capping enzyme"/>
    <property type="match status" value="1"/>
</dbReference>
<dbReference type="Gene3D" id="2.40.50.140">
    <property type="entry name" value="Nucleic acid-binding proteins"/>
    <property type="match status" value="1"/>
</dbReference>
<dbReference type="HAMAP" id="MF_00407">
    <property type="entry name" value="DNA_ligase"/>
    <property type="match status" value="1"/>
</dbReference>
<dbReference type="InterPro" id="IPR050191">
    <property type="entry name" value="ATP-dep_DNA_ligase"/>
</dbReference>
<dbReference type="InterPro" id="IPR022865">
    <property type="entry name" value="DNA_ligae_ATP-dep_bac/arc"/>
</dbReference>
<dbReference type="InterPro" id="IPR000977">
    <property type="entry name" value="DNA_ligase_ATP-dep"/>
</dbReference>
<dbReference type="InterPro" id="IPR012309">
    <property type="entry name" value="DNA_ligase_ATP-dep_C"/>
</dbReference>
<dbReference type="InterPro" id="IPR012310">
    <property type="entry name" value="DNA_ligase_ATP-dep_cent"/>
</dbReference>
<dbReference type="InterPro" id="IPR016059">
    <property type="entry name" value="DNA_ligase_ATP-dep_CS"/>
</dbReference>
<dbReference type="InterPro" id="IPR012308">
    <property type="entry name" value="DNA_ligase_ATP-dep_N"/>
</dbReference>
<dbReference type="InterPro" id="IPR036599">
    <property type="entry name" value="DNA_ligase_N_sf"/>
</dbReference>
<dbReference type="InterPro" id="IPR012340">
    <property type="entry name" value="NA-bd_OB-fold"/>
</dbReference>
<dbReference type="NCBIfam" id="TIGR00574">
    <property type="entry name" value="dnl1"/>
    <property type="match status" value="1"/>
</dbReference>
<dbReference type="PANTHER" id="PTHR45674:SF7">
    <property type="entry name" value="DNA LIGASE"/>
    <property type="match status" value="1"/>
</dbReference>
<dbReference type="PANTHER" id="PTHR45674">
    <property type="entry name" value="DNA LIGASE 1/3 FAMILY MEMBER"/>
    <property type="match status" value="1"/>
</dbReference>
<dbReference type="Pfam" id="PF04679">
    <property type="entry name" value="DNA_ligase_A_C"/>
    <property type="match status" value="1"/>
</dbReference>
<dbReference type="Pfam" id="PF01068">
    <property type="entry name" value="DNA_ligase_A_M"/>
    <property type="match status" value="1"/>
</dbReference>
<dbReference type="Pfam" id="PF04675">
    <property type="entry name" value="DNA_ligase_A_N"/>
    <property type="match status" value="1"/>
</dbReference>
<dbReference type="SUPFAM" id="SSF117018">
    <property type="entry name" value="ATP-dependent DNA ligase DNA-binding domain"/>
    <property type="match status" value="1"/>
</dbReference>
<dbReference type="SUPFAM" id="SSF56091">
    <property type="entry name" value="DNA ligase/mRNA capping enzyme, catalytic domain"/>
    <property type="match status" value="1"/>
</dbReference>
<dbReference type="SUPFAM" id="SSF50249">
    <property type="entry name" value="Nucleic acid-binding proteins"/>
    <property type="match status" value="1"/>
</dbReference>
<dbReference type="PROSITE" id="PS00697">
    <property type="entry name" value="DNA_LIGASE_A1"/>
    <property type="match status" value="1"/>
</dbReference>
<dbReference type="PROSITE" id="PS00333">
    <property type="entry name" value="DNA_LIGASE_A2"/>
    <property type="match status" value="1"/>
</dbReference>
<dbReference type="PROSITE" id="PS50160">
    <property type="entry name" value="DNA_LIGASE_A3"/>
    <property type="match status" value="1"/>
</dbReference>
<evidence type="ECO:0000255" key="1">
    <source>
        <dbReference type="HAMAP-Rule" id="MF_00407"/>
    </source>
</evidence>
<comment type="function">
    <text evidence="1">DNA ligase that seals nicks in double-stranded DNA during DNA replication, DNA recombination and DNA repair.</text>
</comment>
<comment type="catalytic activity">
    <reaction evidence="1">
        <text>ATP + (deoxyribonucleotide)n-3'-hydroxyl + 5'-phospho-(deoxyribonucleotide)m = (deoxyribonucleotide)n+m + AMP + diphosphate.</text>
        <dbReference type="EC" id="6.5.1.1"/>
    </reaction>
</comment>
<comment type="cofactor">
    <cofactor evidence="1">
        <name>Mg(2+)</name>
        <dbReference type="ChEBI" id="CHEBI:18420"/>
    </cofactor>
</comment>
<comment type="similarity">
    <text evidence="1">Belongs to the ATP-dependent DNA ligase family.</text>
</comment>
<proteinExistence type="inferred from homology"/>
<feature type="chain" id="PRO_1000049870" description="DNA ligase">
    <location>
        <begin position="1"/>
        <end position="573"/>
    </location>
</feature>
<feature type="active site" description="N6-AMP-lysine intermediate" evidence="1">
    <location>
        <position position="252"/>
    </location>
</feature>
<feature type="binding site" evidence="1">
    <location>
        <position position="250"/>
    </location>
    <ligand>
        <name>ATP</name>
        <dbReference type="ChEBI" id="CHEBI:30616"/>
    </ligand>
</feature>
<feature type="binding site" evidence="1">
    <location>
        <position position="257"/>
    </location>
    <ligand>
        <name>ATP</name>
        <dbReference type="ChEBI" id="CHEBI:30616"/>
    </ligand>
</feature>
<feature type="binding site" evidence="1">
    <location>
        <position position="272"/>
    </location>
    <ligand>
        <name>ATP</name>
        <dbReference type="ChEBI" id="CHEBI:30616"/>
    </ligand>
</feature>
<feature type="binding site" evidence="1">
    <location>
        <position position="301"/>
    </location>
    <ligand>
        <name>ATP</name>
        <dbReference type="ChEBI" id="CHEBI:30616"/>
    </ligand>
</feature>
<feature type="binding site" evidence="1">
    <location>
        <position position="342"/>
    </location>
    <ligand>
        <name>ATP</name>
        <dbReference type="ChEBI" id="CHEBI:30616"/>
    </ligand>
</feature>
<feature type="binding site" evidence="1">
    <location>
        <position position="432"/>
    </location>
    <ligand>
        <name>ATP</name>
        <dbReference type="ChEBI" id="CHEBI:30616"/>
    </ligand>
</feature>
<feature type="binding site" evidence="1">
    <location>
        <position position="438"/>
    </location>
    <ligand>
        <name>ATP</name>
        <dbReference type="ChEBI" id="CHEBI:30616"/>
    </ligand>
</feature>
<organism>
    <name type="scientific">Methanococcus maripaludis (strain C5 / ATCC BAA-1333)</name>
    <dbReference type="NCBI Taxonomy" id="402880"/>
    <lineage>
        <taxon>Archaea</taxon>
        <taxon>Methanobacteriati</taxon>
        <taxon>Methanobacteriota</taxon>
        <taxon>Methanomada group</taxon>
        <taxon>Methanococci</taxon>
        <taxon>Methanococcales</taxon>
        <taxon>Methanococcaceae</taxon>
        <taxon>Methanococcus</taxon>
    </lineage>
</organism>
<name>DNLI_METM5</name>
<reference key="1">
    <citation type="submission" date="2007-03" db="EMBL/GenBank/DDBJ databases">
        <title>Complete sequence of chromosome of Methanococcus maripaludis C5.</title>
        <authorList>
            <consortium name="US DOE Joint Genome Institute"/>
            <person name="Copeland A."/>
            <person name="Lucas S."/>
            <person name="Lapidus A."/>
            <person name="Barry K."/>
            <person name="Glavina del Rio T."/>
            <person name="Dalin E."/>
            <person name="Tice H."/>
            <person name="Pitluck S."/>
            <person name="Chertkov O."/>
            <person name="Brettin T."/>
            <person name="Bruce D."/>
            <person name="Han C."/>
            <person name="Detter J.C."/>
            <person name="Schmutz J."/>
            <person name="Larimer F."/>
            <person name="Land M."/>
            <person name="Hauser L."/>
            <person name="Kyrpides N."/>
            <person name="Mikhailova N."/>
            <person name="Sieprawska-Lupa M."/>
            <person name="Whitman W.B."/>
            <person name="Richardson P."/>
        </authorList>
    </citation>
    <scope>NUCLEOTIDE SEQUENCE [LARGE SCALE GENOMIC DNA]</scope>
    <source>
        <strain>C5 / ATCC BAA-1333</strain>
    </source>
</reference>
<accession>A4FY19</accession>
<gene>
    <name evidence="1" type="primary">lig</name>
    <name type="ordered locus">MmarC5_0793</name>
</gene>
<protein>
    <recommendedName>
        <fullName evidence="1">DNA ligase</fullName>
        <ecNumber evidence="1">6.5.1.1</ecNumber>
    </recommendedName>
    <alternativeName>
        <fullName evidence="1">Polydeoxyribonucleotide synthase [ATP]</fullName>
    </alternativeName>
</protein>
<sequence length="573" mass="65893">MLFNDFCKILDKIEKTTKRLEKTDYFVELIDFIKTNGKPENLKQVSQITIGRVFAEFENKEIGIGPNLLLEAVKTTGISEKDLKAEIKKTGDIGTAVENLSSNIKQVSLFSQPLTLEEMYSTLKKLSEIEGNSSQKKKIRIISNLLILANPVESRYISRLILEDMRIGMNIPTILASFSNYFNVNKENVEKIYAVTNDIGLLGEKLISGSDIENDSELHLKVFRPIKPMLAQLTPSIEDAIIETKIPQFETKYDGARVQVHKSNGEVKIYSRRLEDITNSVPELVEEIKKIDIDNIILEGECVAMDLSSGKPRPFQDILRRFRRKYDINKMAEKIALRIYFFDVLYYNRGLIDTPLRNRREILEKLFGTNDWDTELEKIEKEILSKKMLFSSFKLNSDDPNLAKEFFNWSLSIGHEGVMIKNPDAPYTPGSRVKTMYKVKPTLENLDVVVTRAKIGMGKRKDWYGSYEISVKDDESNLHVIGNVGSGLTEDDLERLTKIVNEIKIEDLGEEVILEPKIVLEVTYEEIQTSEKYEMGYALRFPRVVQIREDKSINDINTLDDVKKIYDIERNRK</sequence>
<keyword id="KW-0067">ATP-binding</keyword>
<keyword id="KW-0131">Cell cycle</keyword>
<keyword id="KW-0132">Cell division</keyword>
<keyword id="KW-0227">DNA damage</keyword>
<keyword id="KW-0233">DNA recombination</keyword>
<keyword id="KW-0234">DNA repair</keyword>
<keyword id="KW-0235">DNA replication</keyword>
<keyword id="KW-0436">Ligase</keyword>
<keyword id="KW-0460">Magnesium</keyword>
<keyword id="KW-0479">Metal-binding</keyword>
<keyword id="KW-0547">Nucleotide-binding</keyword>